<name>MLTF_ACTPJ</name>
<gene>
    <name evidence="1" type="primary">mltF</name>
    <name type="ordered locus">APJL_1384</name>
</gene>
<feature type="signal peptide" evidence="1">
    <location>
        <begin position="1"/>
        <end position="18"/>
    </location>
</feature>
<feature type="chain" id="PRO_0000353915" description="Membrane-bound lytic murein transglycosylase F">
    <location>
        <begin position="19"/>
        <end position="483"/>
    </location>
</feature>
<feature type="region of interest" description="Non-LT domain" evidence="1">
    <location>
        <begin position="19"/>
        <end position="267"/>
    </location>
</feature>
<feature type="region of interest" description="LT domain" evidence="1">
    <location>
        <begin position="269"/>
        <end position="483"/>
    </location>
</feature>
<feature type="region of interest" description="Disordered" evidence="2">
    <location>
        <begin position="458"/>
        <end position="483"/>
    </location>
</feature>
<feature type="compositionally biased region" description="Basic and acidic residues" evidence="2">
    <location>
        <begin position="473"/>
        <end position="483"/>
    </location>
</feature>
<feature type="active site" evidence="1">
    <location>
        <position position="312"/>
    </location>
</feature>
<accession>B0BQV5</accession>
<dbReference type="EC" id="4.2.2.n1" evidence="1"/>
<dbReference type="EMBL" id="CP000687">
    <property type="protein sequence ID" value="ABY69940.1"/>
    <property type="status" value="ALT_INIT"/>
    <property type="molecule type" value="Genomic_DNA"/>
</dbReference>
<dbReference type="RefSeq" id="WP_005612849.1">
    <property type="nucleotide sequence ID" value="NC_010278.1"/>
</dbReference>
<dbReference type="SMR" id="B0BQV5"/>
<dbReference type="CAZy" id="GH23">
    <property type="family name" value="Glycoside Hydrolase Family 23"/>
</dbReference>
<dbReference type="KEGG" id="apj:APJL_1384"/>
<dbReference type="HOGENOM" id="CLU_027494_0_1_6"/>
<dbReference type="Proteomes" id="UP000008547">
    <property type="component" value="Chromosome"/>
</dbReference>
<dbReference type="GO" id="GO:0009279">
    <property type="term" value="C:cell outer membrane"/>
    <property type="evidence" value="ECO:0007669"/>
    <property type="project" value="UniProtKB-SubCell"/>
</dbReference>
<dbReference type="GO" id="GO:0008933">
    <property type="term" value="F:peptidoglycan lytic transglycosylase activity"/>
    <property type="evidence" value="ECO:0007669"/>
    <property type="project" value="UniProtKB-UniRule"/>
</dbReference>
<dbReference type="GO" id="GO:0016998">
    <property type="term" value="P:cell wall macromolecule catabolic process"/>
    <property type="evidence" value="ECO:0007669"/>
    <property type="project" value="UniProtKB-UniRule"/>
</dbReference>
<dbReference type="GO" id="GO:0071555">
    <property type="term" value="P:cell wall organization"/>
    <property type="evidence" value="ECO:0007669"/>
    <property type="project" value="UniProtKB-KW"/>
</dbReference>
<dbReference type="GO" id="GO:0009253">
    <property type="term" value="P:peptidoglycan catabolic process"/>
    <property type="evidence" value="ECO:0007669"/>
    <property type="project" value="TreeGrafter"/>
</dbReference>
<dbReference type="CDD" id="cd13403">
    <property type="entry name" value="MLTF-like"/>
    <property type="match status" value="1"/>
</dbReference>
<dbReference type="CDD" id="cd01009">
    <property type="entry name" value="PBP2_YfhD_N"/>
    <property type="match status" value="1"/>
</dbReference>
<dbReference type="Gene3D" id="1.10.530.10">
    <property type="match status" value="1"/>
</dbReference>
<dbReference type="Gene3D" id="3.40.190.10">
    <property type="entry name" value="Periplasmic binding protein-like II"/>
    <property type="match status" value="2"/>
</dbReference>
<dbReference type="HAMAP" id="MF_02016">
    <property type="entry name" value="MltF"/>
    <property type="match status" value="1"/>
</dbReference>
<dbReference type="InterPro" id="IPR023346">
    <property type="entry name" value="Lysozyme-like_dom_sf"/>
</dbReference>
<dbReference type="InterPro" id="IPR023703">
    <property type="entry name" value="MltF"/>
</dbReference>
<dbReference type="InterPro" id="IPR001638">
    <property type="entry name" value="Solute-binding_3/MltF_N"/>
</dbReference>
<dbReference type="InterPro" id="IPR000189">
    <property type="entry name" value="Transglyc_AS"/>
</dbReference>
<dbReference type="InterPro" id="IPR008258">
    <property type="entry name" value="Transglycosylase_SLT_dom_1"/>
</dbReference>
<dbReference type="NCBIfam" id="NF008112">
    <property type="entry name" value="PRK10859.1"/>
    <property type="match status" value="1"/>
</dbReference>
<dbReference type="PANTHER" id="PTHR35936">
    <property type="entry name" value="MEMBRANE-BOUND LYTIC MUREIN TRANSGLYCOSYLASE F"/>
    <property type="match status" value="1"/>
</dbReference>
<dbReference type="PANTHER" id="PTHR35936:SF32">
    <property type="entry name" value="MEMBRANE-BOUND LYTIC MUREIN TRANSGLYCOSYLASE F"/>
    <property type="match status" value="1"/>
</dbReference>
<dbReference type="Pfam" id="PF00497">
    <property type="entry name" value="SBP_bac_3"/>
    <property type="match status" value="1"/>
</dbReference>
<dbReference type="Pfam" id="PF01464">
    <property type="entry name" value="SLT"/>
    <property type="match status" value="1"/>
</dbReference>
<dbReference type="SMART" id="SM00062">
    <property type="entry name" value="PBPb"/>
    <property type="match status" value="1"/>
</dbReference>
<dbReference type="SUPFAM" id="SSF53955">
    <property type="entry name" value="Lysozyme-like"/>
    <property type="match status" value="1"/>
</dbReference>
<dbReference type="SUPFAM" id="SSF53850">
    <property type="entry name" value="Periplasmic binding protein-like II"/>
    <property type="match status" value="1"/>
</dbReference>
<dbReference type="PROSITE" id="PS00922">
    <property type="entry name" value="TRANSGLYCOSYLASE"/>
    <property type="match status" value="1"/>
</dbReference>
<keyword id="KW-0998">Cell outer membrane</keyword>
<keyword id="KW-0961">Cell wall biogenesis/degradation</keyword>
<keyword id="KW-0456">Lyase</keyword>
<keyword id="KW-0472">Membrane</keyword>
<keyword id="KW-0732">Signal</keyword>
<proteinExistence type="inferred from homology"/>
<evidence type="ECO:0000255" key="1">
    <source>
        <dbReference type="HAMAP-Rule" id="MF_02016"/>
    </source>
</evidence>
<evidence type="ECO:0000256" key="2">
    <source>
        <dbReference type="SAM" id="MobiDB-lite"/>
    </source>
</evidence>
<evidence type="ECO:0000305" key="3"/>
<comment type="function">
    <text evidence="1">Murein-degrading enzyme that degrades murein glycan strands and insoluble, high-molecular weight murein sacculi, with the concomitant formation of a 1,6-anhydromuramoyl product. Lytic transglycosylases (LTs) play an integral role in the metabolism of the peptidoglycan (PG) sacculus. Their lytic action creates space within the PG sacculus to allow for its expansion as well as for the insertion of various structures such as secretion systems and flagella.</text>
</comment>
<comment type="catalytic activity">
    <reaction evidence="1">
        <text>Exolytic cleavage of the (1-&gt;4)-beta-glycosidic linkage between N-acetylmuramic acid (MurNAc) and N-acetylglucosamine (GlcNAc) residues in peptidoglycan, from either the reducing or the non-reducing ends of the peptidoglycan chains, with concomitant formation of a 1,6-anhydrobond in the MurNAc residue.</text>
        <dbReference type="EC" id="4.2.2.n1"/>
    </reaction>
</comment>
<comment type="subcellular location">
    <subcellularLocation>
        <location>Cell outer membrane</location>
        <topology>Peripheral membrane protein</topology>
    </subcellularLocation>
    <text evidence="1">Attached to the inner leaflet of the outer membrane.</text>
</comment>
<comment type="domain">
    <text evidence="1">The N-terminal domain does not have lytic activity and probably modulates enzymatic activity. The C-terminal domain is the catalytic active domain.</text>
</comment>
<comment type="similarity">
    <text evidence="1">In the N-terminal section; belongs to the bacterial solute-binding protein 3 family.</text>
</comment>
<comment type="similarity">
    <text evidence="1">In the C-terminal section; belongs to the transglycosylase Slt family.</text>
</comment>
<comment type="sequence caution" evidence="3">
    <conflict type="erroneous initiation">
        <sequence resource="EMBL-CDS" id="ABY69940"/>
    </conflict>
</comment>
<organism>
    <name type="scientific">Actinobacillus pleuropneumoniae serotype 3 (strain JL03)</name>
    <dbReference type="NCBI Taxonomy" id="434271"/>
    <lineage>
        <taxon>Bacteria</taxon>
        <taxon>Pseudomonadati</taxon>
        <taxon>Pseudomonadota</taxon>
        <taxon>Gammaproteobacteria</taxon>
        <taxon>Pasteurellales</taxon>
        <taxon>Pasteurellaceae</taxon>
        <taxon>Actinobacillus</taxon>
    </lineage>
</organism>
<sequence>MKGLIARFIAGFALLLWAWDMVFPWQQLMQAEENRYNQIQQRKILRVGMVNHPLSYFIGAEGTAGIEYELAKSFANYLDVRLDIKTFDNSEQLFSALKDNKVDIAAAGLLYQPELSKQFQIGSAYYSASWQVVYKKGSNRPYKLSELEGDLIIPAGSAVLPILQRLKEDNPKLSWQTTNQFTQEELLLQVAEGKIPYTVGISVDISAAQHIRPNIAVGFDLTDEAPVLWYLPNSSYSELQAAVLDFMNHANETGLISRIEEKYFNHLAHFDYVDIQSYLKAIKLVLPKYQSLFEKYRGDLEWQMLAAIAYQESHWDPNATSPTGVRGMMMLTRDTAERMKITDRTSAEQSIRAGSEYLHMLMRQIPETVPKEDRIWYGLAAYNMGFGHLLDVRRLTRQLGGNPDNWLDVKKNLPLLAEKRHYSGLKYGYARGFEAFQYVENIRRYYSSIINHQRVEEQQIQNNEEQPSVPQEISKESDSTLKE</sequence>
<reference key="1">
    <citation type="journal article" date="2008" name="PLoS ONE">
        <title>Genome biology of Actinobacillus pleuropneumoniae JL03, an isolate of serotype 3 prevalent in China.</title>
        <authorList>
            <person name="Xu Z."/>
            <person name="Zhou Y."/>
            <person name="Li L."/>
            <person name="Zhou R."/>
            <person name="Xiao S."/>
            <person name="Wan Y."/>
            <person name="Zhang S."/>
            <person name="Wang K."/>
            <person name="Li W."/>
            <person name="Li L."/>
            <person name="Jin H."/>
            <person name="Kang M."/>
            <person name="Dalai B."/>
            <person name="Li T."/>
            <person name="Liu L."/>
            <person name="Cheng Y."/>
            <person name="Zhang L."/>
            <person name="Xu T."/>
            <person name="Zheng H."/>
            <person name="Pu S."/>
            <person name="Wang B."/>
            <person name="Gu W."/>
            <person name="Zhang X.L."/>
            <person name="Zhu G.-F."/>
            <person name="Wang S."/>
            <person name="Zhao G.-P."/>
            <person name="Chen H."/>
        </authorList>
    </citation>
    <scope>NUCLEOTIDE SEQUENCE [LARGE SCALE GENOMIC DNA]</scope>
    <source>
        <strain>JL03</strain>
    </source>
</reference>
<protein>
    <recommendedName>
        <fullName evidence="1">Membrane-bound lytic murein transglycosylase F</fullName>
        <ecNumber evidence="1">4.2.2.n1</ecNumber>
    </recommendedName>
    <alternativeName>
        <fullName evidence="1">Murein lyase F</fullName>
    </alternativeName>
</protein>